<gene>
    <name evidence="2" type="primary">deoD</name>
    <name type="ordered locus">ECP_4768</name>
</gene>
<accession>Q0T8S9</accession>
<keyword id="KW-0007">Acetylation</keyword>
<keyword id="KW-0328">Glycosyltransferase</keyword>
<keyword id="KW-0808">Transferase</keyword>
<feature type="chain" id="PRO_1000069627" description="Purine nucleoside phosphorylase DeoD-type">
    <location>
        <begin position="1"/>
        <end position="239"/>
    </location>
</feature>
<feature type="active site" description="Proton donor" evidence="2">
    <location>
        <position position="205"/>
    </location>
</feature>
<feature type="binding site" evidence="1">
    <location>
        <position position="5"/>
    </location>
    <ligand>
        <name>a purine D-ribonucleoside</name>
        <dbReference type="ChEBI" id="CHEBI:142355"/>
        <note>ligand shared between dimeric partners</note>
    </ligand>
</feature>
<feature type="binding site" description="in other chain" evidence="1">
    <location>
        <position position="21"/>
    </location>
    <ligand>
        <name>phosphate</name>
        <dbReference type="ChEBI" id="CHEBI:43474"/>
        <note>ligand shared between dimeric partners</note>
    </ligand>
</feature>
<feature type="binding site" description="in other chain" evidence="1">
    <location>
        <position position="25"/>
    </location>
    <ligand>
        <name>phosphate</name>
        <dbReference type="ChEBI" id="CHEBI:43474"/>
        <note>ligand shared between dimeric partners</note>
    </ligand>
</feature>
<feature type="binding site" evidence="1">
    <location>
        <position position="44"/>
    </location>
    <ligand>
        <name>phosphate</name>
        <dbReference type="ChEBI" id="CHEBI:43474"/>
        <note>ligand shared between dimeric partners</note>
    </ligand>
</feature>
<feature type="binding site" description="in other chain" evidence="1">
    <location>
        <begin position="88"/>
        <end position="91"/>
    </location>
    <ligand>
        <name>phosphate</name>
        <dbReference type="ChEBI" id="CHEBI:43474"/>
        <note>ligand shared between dimeric partners</note>
    </ligand>
</feature>
<feature type="binding site" description="in other chain" evidence="1">
    <location>
        <begin position="180"/>
        <end position="182"/>
    </location>
    <ligand>
        <name>a purine D-ribonucleoside</name>
        <dbReference type="ChEBI" id="CHEBI:142355"/>
        <note>ligand shared between dimeric partners</note>
    </ligand>
</feature>
<feature type="binding site" description="in other chain" evidence="1">
    <location>
        <begin position="204"/>
        <end position="205"/>
    </location>
    <ligand>
        <name>a purine D-ribonucleoside</name>
        <dbReference type="ChEBI" id="CHEBI:142355"/>
        <note>ligand shared between dimeric partners</note>
    </ligand>
</feature>
<feature type="site" description="Important for catalytic activity" evidence="2">
    <location>
        <position position="218"/>
    </location>
</feature>
<feature type="modified residue" description="N6-acetyllysine" evidence="2">
    <location>
        <position position="27"/>
    </location>
</feature>
<proteinExistence type="inferred from homology"/>
<evidence type="ECO:0000250" key="1">
    <source>
        <dbReference type="UniProtKB" id="P50389"/>
    </source>
</evidence>
<evidence type="ECO:0000255" key="2">
    <source>
        <dbReference type="HAMAP-Rule" id="MF_01627"/>
    </source>
</evidence>
<organism>
    <name type="scientific">Escherichia coli O6:K15:H31 (strain 536 / UPEC)</name>
    <dbReference type="NCBI Taxonomy" id="362663"/>
    <lineage>
        <taxon>Bacteria</taxon>
        <taxon>Pseudomonadati</taxon>
        <taxon>Pseudomonadota</taxon>
        <taxon>Gammaproteobacteria</taxon>
        <taxon>Enterobacterales</taxon>
        <taxon>Enterobacteriaceae</taxon>
        <taxon>Escherichia</taxon>
    </lineage>
</organism>
<sequence>MATPHINAEMGDFADVVLMPGDPLRAKYIAETFLEDAREVNNVRGMLGFTGTYKGRKISVMGHGMGIPSCSIYTKELITDFGVKKIIRVGSCGAVLPHVKLRDVVIGMGACTDSKVNRIRFKDHDFAAIADFDMVRNAVDAAKALGVDARVGNLFSADLFYSPDGEMFDVMEKYGILGVEMEAAGIYGVAAEFGAKALTICTVSDHIRTHEQTTAAERQTTFNDMIKIALESVLLGDKE</sequence>
<dbReference type="EC" id="2.4.2.1" evidence="2"/>
<dbReference type="EMBL" id="CP000247">
    <property type="protein sequence ID" value="ABG72650.1"/>
    <property type="molecule type" value="Genomic_DNA"/>
</dbReference>
<dbReference type="RefSeq" id="WP_000224879.1">
    <property type="nucleotide sequence ID" value="NC_008253.1"/>
</dbReference>
<dbReference type="SMR" id="Q0T8S9"/>
<dbReference type="KEGG" id="ecp:ECP_4768"/>
<dbReference type="HOGENOM" id="CLU_068457_2_0_6"/>
<dbReference type="Proteomes" id="UP000009182">
    <property type="component" value="Chromosome"/>
</dbReference>
<dbReference type="GO" id="GO:0005829">
    <property type="term" value="C:cytosol"/>
    <property type="evidence" value="ECO:0007669"/>
    <property type="project" value="TreeGrafter"/>
</dbReference>
<dbReference type="GO" id="GO:0004731">
    <property type="term" value="F:purine-nucleoside phosphorylase activity"/>
    <property type="evidence" value="ECO:0007669"/>
    <property type="project" value="UniProtKB-UniRule"/>
</dbReference>
<dbReference type="GO" id="GO:0006152">
    <property type="term" value="P:purine nucleoside catabolic process"/>
    <property type="evidence" value="ECO:0007669"/>
    <property type="project" value="TreeGrafter"/>
</dbReference>
<dbReference type="CDD" id="cd09006">
    <property type="entry name" value="PNP_EcPNPI-like"/>
    <property type="match status" value="1"/>
</dbReference>
<dbReference type="FunFam" id="3.40.50.1580:FF:000002">
    <property type="entry name" value="Purine nucleoside phosphorylase DeoD-type"/>
    <property type="match status" value="1"/>
</dbReference>
<dbReference type="Gene3D" id="3.40.50.1580">
    <property type="entry name" value="Nucleoside phosphorylase domain"/>
    <property type="match status" value="1"/>
</dbReference>
<dbReference type="HAMAP" id="MF_01627">
    <property type="entry name" value="Pur_nucleosid_phosp"/>
    <property type="match status" value="1"/>
</dbReference>
<dbReference type="InterPro" id="IPR004402">
    <property type="entry name" value="DeoD-type"/>
</dbReference>
<dbReference type="InterPro" id="IPR018016">
    <property type="entry name" value="Nucleoside_phosphorylase_CS"/>
</dbReference>
<dbReference type="InterPro" id="IPR000845">
    <property type="entry name" value="Nucleoside_phosphorylase_d"/>
</dbReference>
<dbReference type="InterPro" id="IPR035994">
    <property type="entry name" value="Nucleoside_phosphorylase_sf"/>
</dbReference>
<dbReference type="NCBIfam" id="TIGR00107">
    <property type="entry name" value="deoD"/>
    <property type="match status" value="1"/>
</dbReference>
<dbReference type="NCBIfam" id="NF004489">
    <property type="entry name" value="PRK05819.1"/>
    <property type="match status" value="1"/>
</dbReference>
<dbReference type="NCBIfam" id="NF009914">
    <property type="entry name" value="PRK13374.1"/>
    <property type="match status" value="1"/>
</dbReference>
<dbReference type="PANTHER" id="PTHR43691:SF2">
    <property type="entry name" value="PURINE NUCLEOSIDE PHOSPHORYLASE DEOD-TYPE"/>
    <property type="match status" value="1"/>
</dbReference>
<dbReference type="PANTHER" id="PTHR43691">
    <property type="entry name" value="URIDINE PHOSPHORYLASE"/>
    <property type="match status" value="1"/>
</dbReference>
<dbReference type="Pfam" id="PF01048">
    <property type="entry name" value="PNP_UDP_1"/>
    <property type="match status" value="1"/>
</dbReference>
<dbReference type="SUPFAM" id="SSF53167">
    <property type="entry name" value="Purine and uridine phosphorylases"/>
    <property type="match status" value="1"/>
</dbReference>
<dbReference type="PROSITE" id="PS01232">
    <property type="entry name" value="PNP_UDP_1"/>
    <property type="match status" value="1"/>
</dbReference>
<name>DEOD_ECOL5</name>
<reference key="1">
    <citation type="journal article" date="2006" name="Mol. Microbiol.">
        <title>Role of pathogenicity island-associated integrases in the genome plasticity of uropathogenic Escherichia coli strain 536.</title>
        <authorList>
            <person name="Hochhut B."/>
            <person name="Wilde C."/>
            <person name="Balling G."/>
            <person name="Middendorf B."/>
            <person name="Dobrindt U."/>
            <person name="Brzuszkiewicz E."/>
            <person name="Gottschalk G."/>
            <person name="Carniel E."/>
            <person name="Hacker J."/>
        </authorList>
    </citation>
    <scope>NUCLEOTIDE SEQUENCE [LARGE SCALE GENOMIC DNA]</scope>
    <source>
        <strain>536 / UPEC</strain>
    </source>
</reference>
<comment type="function">
    <text evidence="2">Catalyzes the reversible phosphorolytic breakdown of the N-glycosidic bond in the beta-(deoxy)ribonucleoside molecules, with the formation of the corresponding free purine bases and pentose-1-phosphate.</text>
</comment>
<comment type="catalytic activity">
    <reaction evidence="2">
        <text>a purine D-ribonucleoside + phosphate = a purine nucleobase + alpha-D-ribose 1-phosphate</text>
        <dbReference type="Rhea" id="RHEA:19805"/>
        <dbReference type="ChEBI" id="CHEBI:26386"/>
        <dbReference type="ChEBI" id="CHEBI:43474"/>
        <dbReference type="ChEBI" id="CHEBI:57720"/>
        <dbReference type="ChEBI" id="CHEBI:142355"/>
        <dbReference type="EC" id="2.4.2.1"/>
    </reaction>
</comment>
<comment type="catalytic activity">
    <reaction evidence="2">
        <text>a purine 2'-deoxy-D-ribonucleoside + phosphate = a purine nucleobase + 2-deoxy-alpha-D-ribose 1-phosphate</text>
        <dbReference type="Rhea" id="RHEA:36431"/>
        <dbReference type="ChEBI" id="CHEBI:26386"/>
        <dbReference type="ChEBI" id="CHEBI:43474"/>
        <dbReference type="ChEBI" id="CHEBI:57259"/>
        <dbReference type="ChEBI" id="CHEBI:142361"/>
        <dbReference type="EC" id="2.4.2.1"/>
    </reaction>
</comment>
<comment type="subunit">
    <text evidence="2">Homohexamer; trimer of homodimers.</text>
</comment>
<comment type="similarity">
    <text evidence="2">Belongs to the PNP/UDP phosphorylase family.</text>
</comment>
<protein>
    <recommendedName>
        <fullName evidence="2">Purine nucleoside phosphorylase DeoD-type</fullName>
        <shortName evidence="2">PNP</shortName>
        <ecNumber evidence="2">2.4.2.1</ecNumber>
    </recommendedName>
</protein>